<feature type="chain" id="PRO_0000237997" description="Large-conductance mechanosensitive channel">
    <location>
        <begin position="1"/>
        <end position="154"/>
    </location>
</feature>
<feature type="transmembrane region" description="Helical" evidence="1">
    <location>
        <begin position="14"/>
        <end position="34"/>
    </location>
</feature>
<feature type="transmembrane region" description="Helical" evidence="1">
    <location>
        <begin position="86"/>
        <end position="106"/>
    </location>
</feature>
<organism>
    <name type="scientific">Dehalococcoides mccartyi (strain CBDB1)</name>
    <dbReference type="NCBI Taxonomy" id="255470"/>
    <lineage>
        <taxon>Bacteria</taxon>
        <taxon>Bacillati</taxon>
        <taxon>Chloroflexota</taxon>
        <taxon>Dehalococcoidia</taxon>
        <taxon>Dehalococcoidales</taxon>
        <taxon>Dehalococcoidaceae</taxon>
        <taxon>Dehalococcoides</taxon>
    </lineage>
</organism>
<dbReference type="EMBL" id="AJ965256">
    <property type="protein sequence ID" value="CAI83394.1"/>
    <property type="molecule type" value="Genomic_DNA"/>
</dbReference>
<dbReference type="RefSeq" id="WP_011309745.1">
    <property type="nucleotide sequence ID" value="NC_007356.1"/>
</dbReference>
<dbReference type="KEGG" id="deh:cbdbA1343"/>
<dbReference type="HOGENOM" id="CLU_095787_2_3_0"/>
<dbReference type="Proteomes" id="UP000000433">
    <property type="component" value="Chromosome"/>
</dbReference>
<dbReference type="GO" id="GO:0005886">
    <property type="term" value="C:plasma membrane"/>
    <property type="evidence" value="ECO:0007669"/>
    <property type="project" value="UniProtKB-SubCell"/>
</dbReference>
<dbReference type="GO" id="GO:0008381">
    <property type="term" value="F:mechanosensitive monoatomic ion channel activity"/>
    <property type="evidence" value="ECO:0007669"/>
    <property type="project" value="UniProtKB-UniRule"/>
</dbReference>
<dbReference type="Gene3D" id="1.10.1200.120">
    <property type="entry name" value="Large-conductance mechanosensitive channel, MscL, domain 1"/>
    <property type="match status" value="1"/>
</dbReference>
<dbReference type="HAMAP" id="MF_00115">
    <property type="entry name" value="MscL"/>
    <property type="match status" value="1"/>
</dbReference>
<dbReference type="InterPro" id="IPR019823">
    <property type="entry name" value="Mechanosensitive_channel_CS"/>
</dbReference>
<dbReference type="InterPro" id="IPR001185">
    <property type="entry name" value="MS_channel"/>
</dbReference>
<dbReference type="InterPro" id="IPR037673">
    <property type="entry name" value="MSC/AndL"/>
</dbReference>
<dbReference type="InterPro" id="IPR036019">
    <property type="entry name" value="MscL_channel"/>
</dbReference>
<dbReference type="NCBIfam" id="TIGR00220">
    <property type="entry name" value="mscL"/>
    <property type="match status" value="1"/>
</dbReference>
<dbReference type="PANTHER" id="PTHR30266:SF2">
    <property type="entry name" value="LARGE-CONDUCTANCE MECHANOSENSITIVE CHANNEL"/>
    <property type="match status" value="1"/>
</dbReference>
<dbReference type="PANTHER" id="PTHR30266">
    <property type="entry name" value="MECHANOSENSITIVE CHANNEL MSCL"/>
    <property type="match status" value="1"/>
</dbReference>
<dbReference type="Pfam" id="PF01741">
    <property type="entry name" value="MscL"/>
    <property type="match status" value="1"/>
</dbReference>
<dbReference type="PRINTS" id="PR01264">
    <property type="entry name" value="MECHCHANNEL"/>
</dbReference>
<dbReference type="SUPFAM" id="SSF81330">
    <property type="entry name" value="Gated mechanosensitive channel"/>
    <property type="match status" value="1"/>
</dbReference>
<dbReference type="PROSITE" id="PS01327">
    <property type="entry name" value="MSCL"/>
    <property type="match status" value="1"/>
</dbReference>
<name>MSCL_DEHMC</name>
<protein>
    <recommendedName>
        <fullName evidence="1">Large-conductance mechanosensitive channel</fullName>
    </recommendedName>
</protein>
<accession>Q3ZYR8</accession>
<sequence length="154" mass="16646">MFKEFKIFIMRGNVVDLAVGIVIGAAFGAIVNSLVKDVLMPPIGLLLGNVDFGNLFIVLKEGAIGGPYESLLVAQTAGAVTINYGVFINALINFLILAMAIFFFVVRPLNQLAARQKSKEAVIPAQTDKKDCPYCDTQIPLKASKCPYCTSELM</sequence>
<proteinExistence type="inferred from homology"/>
<gene>
    <name evidence="1" type="primary">mscL</name>
    <name type="ordered locus">cbdbA1343</name>
</gene>
<comment type="function">
    <text evidence="1">Channel that opens in response to stretch forces in the membrane lipid bilayer. May participate in the regulation of osmotic pressure changes within the cell.</text>
</comment>
<comment type="subunit">
    <text evidence="1">Homopentamer.</text>
</comment>
<comment type="subcellular location">
    <subcellularLocation>
        <location evidence="1">Cell membrane</location>
        <topology evidence="1">Multi-pass membrane protein</topology>
    </subcellularLocation>
</comment>
<comment type="similarity">
    <text evidence="1">Belongs to the MscL family.</text>
</comment>
<keyword id="KW-1003">Cell membrane</keyword>
<keyword id="KW-0407">Ion channel</keyword>
<keyword id="KW-0406">Ion transport</keyword>
<keyword id="KW-0472">Membrane</keyword>
<keyword id="KW-0812">Transmembrane</keyword>
<keyword id="KW-1133">Transmembrane helix</keyword>
<keyword id="KW-0813">Transport</keyword>
<reference key="1">
    <citation type="journal article" date="2005" name="Nat. Biotechnol.">
        <title>Genome sequence of the chlorinated compound-respiring bacterium Dehalococcoides species strain CBDB1.</title>
        <authorList>
            <person name="Kube M."/>
            <person name="Beck A."/>
            <person name="Zinder S.H."/>
            <person name="Kuhl H."/>
            <person name="Reinhardt R."/>
            <person name="Adrian L."/>
        </authorList>
    </citation>
    <scope>NUCLEOTIDE SEQUENCE [LARGE SCALE GENOMIC DNA]</scope>
    <source>
        <strain>CBDB1</strain>
    </source>
</reference>
<evidence type="ECO:0000255" key="1">
    <source>
        <dbReference type="HAMAP-Rule" id="MF_00115"/>
    </source>
</evidence>